<sequence length="100" mass="9000">MTLFSSISSMSTSMSGSKSSIASFGSGTSMSSNSIACGGGCGGSGGILGSGLGLGLGLGLDLTGGSRSRGSCGGNRGNGNGNGGMGGGNGSCCGGPCCGI</sequence>
<comment type="similarity">
    <text evidence="2">Belongs to the hssA/B family.</text>
</comment>
<organism>
    <name type="scientific">Dictyostelium discoideum</name>
    <name type="common">Social amoeba</name>
    <dbReference type="NCBI Taxonomy" id="44689"/>
    <lineage>
        <taxon>Eukaryota</taxon>
        <taxon>Amoebozoa</taxon>
        <taxon>Evosea</taxon>
        <taxon>Eumycetozoa</taxon>
        <taxon>Dictyostelia</taxon>
        <taxon>Dictyosteliales</taxon>
        <taxon>Dictyosteliaceae</taxon>
        <taxon>Dictyostelium</taxon>
    </lineage>
</organism>
<reference key="1">
    <citation type="journal article" date="2005" name="Nature">
        <title>The genome of the social amoeba Dictyostelium discoideum.</title>
        <authorList>
            <person name="Eichinger L."/>
            <person name="Pachebat J.A."/>
            <person name="Gloeckner G."/>
            <person name="Rajandream M.A."/>
            <person name="Sucgang R."/>
            <person name="Berriman M."/>
            <person name="Song J."/>
            <person name="Olsen R."/>
            <person name="Szafranski K."/>
            <person name="Xu Q."/>
            <person name="Tunggal B."/>
            <person name="Kummerfeld S."/>
            <person name="Madera M."/>
            <person name="Konfortov B.A."/>
            <person name="Rivero F."/>
            <person name="Bankier A.T."/>
            <person name="Lehmann R."/>
            <person name="Hamlin N."/>
            <person name="Davies R."/>
            <person name="Gaudet P."/>
            <person name="Fey P."/>
            <person name="Pilcher K."/>
            <person name="Chen G."/>
            <person name="Saunders D."/>
            <person name="Sodergren E.J."/>
            <person name="Davis P."/>
            <person name="Kerhornou A."/>
            <person name="Nie X."/>
            <person name="Hall N."/>
            <person name="Anjard C."/>
            <person name="Hemphill L."/>
            <person name="Bason N."/>
            <person name="Farbrother P."/>
            <person name="Desany B."/>
            <person name="Just E."/>
            <person name="Morio T."/>
            <person name="Rost R."/>
            <person name="Churcher C.M."/>
            <person name="Cooper J."/>
            <person name="Haydock S."/>
            <person name="van Driessche N."/>
            <person name="Cronin A."/>
            <person name="Goodhead I."/>
            <person name="Muzny D.M."/>
            <person name="Mourier T."/>
            <person name="Pain A."/>
            <person name="Lu M."/>
            <person name="Harper D."/>
            <person name="Lindsay R."/>
            <person name="Hauser H."/>
            <person name="James K.D."/>
            <person name="Quiles M."/>
            <person name="Madan Babu M."/>
            <person name="Saito T."/>
            <person name="Buchrieser C."/>
            <person name="Wardroper A."/>
            <person name="Felder M."/>
            <person name="Thangavelu M."/>
            <person name="Johnson D."/>
            <person name="Knights A."/>
            <person name="Loulseged H."/>
            <person name="Mungall K.L."/>
            <person name="Oliver K."/>
            <person name="Price C."/>
            <person name="Quail M.A."/>
            <person name="Urushihara H."/>
            <person name="Hernandez J."/>
            <person name="Rabbinowitsch E."/>
            <person name="Steffen D."/>
            <person name="Sanders M."/>
            <person name="Ma J."/>
            <person name="Kohara Y."/>
            <person name="Sharp S."/>
            <person name="Simmonds M.N."/>
            <person name="Spiegler S."/>
            <person name="Tivey A."/>
            <person name="Sugano S."/>
            <person name="White B."/>
            <person name="Walker D."/>
            <person name="Woodward J.R."/>
            <person name="Winckler T."/>
            <person name="Tanaka Y."/>
            <person name="Shaulsky G."/>
            <person name="Schleicher M."/>
            <person name="Weinstock G.M."/>
            <person name="Rosenthal A."/>
            <person name="Cox E.C."/>
            <person name="Chisholm R.L."/>
            <person name="Gibbs R.A."/>
            <person name="Loomis W.F."/>
            <person name="Platzer M."/>
            <person name="Kay R.R."/>
            <person name="Williams J.G."/>
            <person name="Dear P.H."/>
            <person name="Noegel A.A."/>
            <person name="Barrell B.G."/>
            <person name="Kuspa A."/>
        </authorList>
    </citation>
    <scope>NUCLEOTIDE SEQUENCE [LARGE SCALE GENOMIC DNA]</scope>
    <source>
        <strain>AX4</strain>
    </source>
</reference>
<proteinExistence type="inferred from homology"/>
<dbReference type="EMBL" id="AAFI02000039">
    <property type="protein sequence ID" value="EAL67006.2"/>
    <property type="molecule type" value="Genomic_DNA"/>
</dbReference>
<dbReference type="RefSeq" id="XP_640989.2">
    <property type="nucleotide sequence ID" value="XM_635897.2"/>
</dbReference>
<dbReference type="PaxDb" id="44689-DDB0252791"/>
<dbReference type="EnsemblProtists" id="EAL67006">
    <property type="protein sequence ID" value="EAL67006"/>
    <property type="gene ID" value="DDB_G0280929"/>
</dbReference>
<dbReference type="GeneID" id="8622797"/>
<dbReference type="KEGG" id="ddi:DDB_G0280929"/>
<dbReference type="dictyBase" id="DDB_G0280929"/>
<dbReference type="HOGENOM" id="CLU_181850_0_0_1"/>
<dbReference type="InParanoid" id="Q54UN2"/>
<dbReference type="PRO" id="PR:Q54UN2"/>
<dbReference type="Proteomes" id="UP000002195">
    <property type="component" value="Chromosome 3"/>
</dbReference>
<dbReference type="GO" id="GO:0030587">
    <property type="term" value="P:sorocarp development"/>
    <property type="evidence" value="ECO:0000318"/>
    <property type="project" value="GO_Central"/>
</dbReference>
<dbReference type="InterPro" id="IPR050533">
    <property type="entry name" value="HssA/B-like_chaperone"/>
</dbReference>
<dbReference type="InterPro" id="IPR008455">
    <property type="entry name" value="HssA/B-related"/>
</dbReference>
<dbReference type="PANTHER" id="PTHR31059">
    <property type="entry name" value="HSSA/B-LIKE PROTEIN 1-RELATED-RELATED"/>
    <property type="match status" value="1"/>
</dbReference>
<dbReference type="PANTHER" id="PTHR31059:SF5">
    <property type="entry name" value="HSSA_B-LIKE PROTEIN 1-RELATED"/>
    <property type="match status" value="1"/>
</dbReference>
<dbReference type="Pfam" id="PF05710">
    <property type="entry name" value="Coiled"/>
    <property type="match status" value="1"/>
</dbReference>
<accession>Q54UN2</accession>
<keyword id="KW-1185">Reference proteome</keyword>
<protein>
    <recommendedName>
        <fullName>HssA/B-like protein 37</fullName>
    </recommendedName>
</protein>
<evidence type="ECO:0000256" key="1">
    <source>
        <dbReference type="SAM" id="MobiDB-lite"/>
    </source>
</evidence>
<evidence type="ECO:0000305" key="2"/>
<gene>
    <name type="primary">hssl37</name>
    <name type="ORF">DDB_G0280929</name>
</gene>
<feature type="chain" id="PRO_0000330405" description="HssA/B-like protein 37">
    <location>
        <begin position="1"/>
        <end position="100"/>
    </location>
</feature>
<feature type="region of interest" description="Disordered" evidence="1">
    <location>
        <begin position="1"/>
        <end position="29"/>
    </location>
</feature>
<feature type="region of interest" description="Disordered" evidence="1">
    <location>
        <begin position="67"/>
        <end position="100"/>
    </location>
</feature>
<feature type="compositionally biased region" description="Gly residues" evidence="1">
    <location>
        <begin position="71"/>
        <end position="93"/>
    </location>
</feature>
<name>HSL37_DICDI</name>